<dbReference type="EMBL" id="M15370">
    <property type="protein sequence ID" value="AAA46745.1"/>
    <property type="molecule type" value="Genomic_DNA"/>
</dbReference>
<dbReference type="EMBL" id="M57687">
    <property type="protein sequence ID" value="AAA67905.1"/>
    <property type="molecule type" value="Genomic_DNA"/>
</dbReference>
<dbReference type="EMBL" id="L22858">
    <property type="protein sequence ID" value="AAA66730.1"/>
    <property type="molecule type" value="Genomic_DNA"/>
</dbReference>
<dbReference type="EMBL" id="U10885">
    <property type="protein sequence ID" value="AAB08766.1"/>
    <property type="molecule type" value="Genomic_DNA"/>
</dbReference>
<dbReference type="PIR" id="A26593">
    <property type="entry name" value="VHNVAC"/>
</dbReference>
<dbReference type="KEGG" id="vg:1403933"/>
<dbReference type="Proteomes" id="UP000008292">
    <property type="component" value="Segment"/>
</dbReference>
<dbReference type="GO" id="GO:0030430">
    <property type="term" value="C:host cell cytoplasm"/>
    <property type="evidence" value="ECO:0007669"/>
    <property type="project" value="UniProtKB-SubCell"/>
</dbReference>
<dbReference type="GO" id="GO:0044204">
    <property type="term" value="C:host cell nuclear matrix"/>
    <property type="evidence" value="ECO:0000314"/>
    <property type="project" value="UniProtKB"/>
</dbReference>
<dbReference type="GO" id="GO:0019013">
    <property type="term" value="C:viral nucleocapsid"/>
    <property type="evidence" value="ECO:0007669"/>
    <property type="project" value="UniProtKB-KW"/>
</dbReference>
<dbReference type="GO" id="GO:0003677">
    <property type="term" value="F:DNA binding"/>
    <property type="evidence" value="ECO:0007669"/>
    <property type="project" value="UniProtKB-KW"/>
</dbReference>
<accession>P06545</accession>
<gene>
    <name type="primary">P6.9</name>
    <name type="ORF">ORF100</name>
</gene>
<name>P69_NPVAC</name>
<proteinExistence type="evidence at protein level"/>
<evidence type="ECO:0000250" key="1"/>
<evidence type="ECO:0000256" key="2">
    <source>
        <dbReference type="SAM" id="MobiDB-lite"/>
    </source>
</evidence>
<evidence type="ECO:0000269" key="3">
    <source>
    </source>
</evidence>
<evidence type="ECO:0000269" key="4">
    <source>
    </source>
</evidence>
<evidence type="ECO:0000269" key="5">
    <source>
    </source>
</evidence>
<sequence>MVYRRRRRSSTGTTYGSTRRRRSSGYRRRPGRPRTYRRSRSRSSTGRRSYRTRYY</sequence>
<protein>
    <recommendedName>
        <fullName>DNA-binding protein</fullName>
    </recommendedName>
    <alternativeName>
        <fullName>Arginine-rich protein 6.9 kDa</fullName>
    </alternativeName>
    <alternativeName>
        <fullName>Basic viral core protein</fullName>
    </alternativeName>
    <alternativeName>
        <fullName>Nucleocapsid protein</fullName>
    </alternativeName>
</protein>
<feature type="initiator methionine" description="Removed; by host" evidence="1">
    <location>
        <position position="1"/>
    </location>
</feature>
<feature type="chain" id="PRO_0000132807" description="DNA-binding protein">
    <location>
        <begin position="2"/>
        <end position="55"/>
    </location>
</feature>
<feature type="repeat" description="1">
    <location>
        <begin position="5"/>
        <end position="10"/>
    </location>
</feature>
<feature type="repeat" description="2">
    <location>
        <begin position="19"/>
        <end position="24"/>
    </location>
</feature>
<feature type="region of interest" description="Disordered" evidence="2">
    <location>
        <begin position="1"/>
        <end position="55"/>
    </location>
</feature>
<feature type="region of interest" description="2 X 6 AA repeats of R-R-R-R-S-S">
    <location>
        <begin position="5"/>
        <end position="24"/>
    </location>
</feature>
<feature type="compositionally biased region" description="Basic residues" evidence="2">
    <location>
        <begin position="18"/>
        <end position="41"/>
    </location>
</feature>
<comment type="function">
    <text evidence="5">Plays a role in viral DNA packaging and nucleocapsid assembly. Promotes viral gene transcription during the late stage of infection while it is non-essential for the basal level of viral gene transcription.</text>
</comment>
<comment type="subunit">
    <text evidence="4">Interacts with protein AC132.</text>
</comment>
<comment type="subcellular location">
    <subcellularLocation>
        <location evidence="3">Virion</location>
    </subcellularLocation>
    <subcellularLocation>
        <location evidence="3">Host cytoplasm</location>
    </subcellularLocation>
    <text evidence="3">Within the host cell, the majority of P6.9 is distributed near the inner nuclear membrane. Present in both the budded virus (BV) and the occluded virus (OV). The occluded form allows the virus to be transmitted from insect to insect through ingestion of contaminated food while the budded form is responsible for the dissemination of infection throughout the insect host.</text>
</comment>
<comment type="PTM">
    <text evidence="3">Phosphorylated.</text>
</comment>
<organismHost>
    <name type="scientific">Lepidoptera</name>
    <name type="common">butterflies and moths</name>
    <dbReference type="NCBI Taxonomy" id="7088"/>
</organismHost>
<reference key="1">
    <citation type="journal article" date="1987" name="J. Virol.">
        <title>Location, transcription, and sequence of a baculovirus gene encoding a small arginine-rich polypeptide.</title>
        <authorList>
            <person name="Wilson M.E."/>
            <person name="Mainprize T.H."/>
            <person name="Friesen P.D."/>
            <person name="Miller L.K."/>
        </authorList>
    </citation>
    <scope>NUCLEOTIDE SEQUENCE [GENOMIC DNA]</scope>
    <source>
        <strain>L1</strain>
    </source>
</reference>
<reference key="2">
    <citation type="journal article" date="1994" name="Virology">
        <title>The complete DNA sequence of Autographa californica nuclear polyhedrosis virus.</title>
        <authorList>
            <person name="Ayres M.D."/>
            <person name="Howard S.C."/>
            <person name="Kuzio J."/>
            <person name="Lopez-Ferber M."/>
            <person name="Possee R.D."/>
        </authorList>
    </citation>
    <scope>NUCLEOTIDE SEQUENCE [LARGE SCALE GENOMIC DNA]</scope>
    <source>
        <strain>C6</strain>
    </source>
</reference>
<reference key="3">
    <citation type="journal article" date="1991" name="Virology">
        <title>Nucleotide sequence of a gene essential for viral DNA replication in the baculovirus Autographa californica nuclear polyhedrosis virus.</title>
        <authorList>
            <person name="Lu A."/>
            <person name="Carstens E.B."/>
        </authorList>
    </citation>
    <scope>NUCLEOTIDE SEQUENCE [GENOMIC DNA] OF 12-55</scope>
    <source>
        <strain>HR3</strain>
    </source>
</reference>
<reference key="4">
    <citation type="submission" date="1994-06" db="EMBL/GenBank/DDBJ databases">
        <authorList>
            <person name="Lu A."/>
            <person name="Craig A."/>
            <person name="Carstens E.B."/>
        </authorList>
    </citation>
    <scope>NUCLEOTIDE SEQUENCE [GENOMIC DNA] OF 1-31</scope>
    <source>
        <strain>HR3</strain>
    </source>
</reference>
<reference key="5">
    <citation type="journal article" date="1988" name="Virology">
        <title>Association of Autographa californica nuclear polyhedrosis virus (AcMNPV) with the nuclear matrix.</title>
        <authorList>
            <person name="Wilson M.E."/>
            <person name="Price K.H."/>
        </authorList>
    </citation>
    <scope>FUNCTION</scope>
</reference>
<reference key="6">
    <citation type="journal article" date="2012" name="J. Virol.">
        <title>Distribution and phosphorylation of the basic protein P6.9 of Autographa californica nucleopolyhedrovirus.</title>
        <authorList>
            <person name="Liu X."/>
            <person name="Zhao H."/>
            <person name="Fang Z."/>
            <person name="Yuan M."/>
            <person name="Yang K."/>
            <person name="Pang Y."/>
        </authorList>
    </citation>
    <scope>PHOSPHORYLATION</scope>
    <scope>SUBCELLULAR LOCATION</scope>
</reference>
<reference key="7">
    <citation type="journal article" date="2014" name="J. Virol.">
        <title>Autographa californica multiple nucleopolyhedrovirus orf132 encodes a nucleocapsid-associated protein required for budded-virus and multiply enveloped occlusion-derived virus production.</title>
        <authorList>
            <person name="Yang M."/>
            <person name="Wang S."/>
            <person name="Yue X.L."/>
            <person name="Li L.L."/>
        </authorList>
    </citation>
    <scope>INTERACTION WITH AC132</scope>
</reference>
<organism>
    <name type="scientific">Autographa californica nuclear polyhedrosis virus</name>
    <name type="common">AcMNPV</name>
    <dbReference type="NCBI Taxonomy" id="46015"/>
    <lineage>
        <taxon>Viruses</taxon>
        <taxon>Viruses incertae sedis</taxon>
        <taxon>Naldaviricetes</taxon>
        <taxon>Lefavirales</taxon>
        <taxon>Baculoviridae</taxon>
        <taxon>Alphabaculovirus</taxon>
        <taxon>Alphabaculovirus aucalifornicae</taxon>
    </lineage>
</organism>
<keyword id="KW-0238">DNA-binding</keyword>
<keyword id="KW-1035">Host cytoplasm</keyword>
<keyword id="KW-0426">Late protein</keyword>
<keyword id="KW-0597">Phosphoprotein</keyword>
<keyword id="KW-1185">Reference proteome</keyword>
<keyword id="KW-0677">Repeat</keyword>
<keyword id="KW-0804">Transcription</keyword>
<keyword id="KW-0805">Transcription regulation</keyword>
<keyword id="KW-0543">Viral nucleoprotein</keyword>
<keyword id="KW-0946">Virion</keyword>